<feature type="chain" id="PRO_0000407732" description="Cell number regulator 4">
    <location>
        <begin position="1"/>
        <end position="159"/>
    </location>
</feature>
<feature type="transmembrane region" description="Helical" evidence="1">
    <location>
        <begin position="52"/>
        <end position="74"/>
    </location>
</feature>
<proteinExistence type="evidence at transcript level"/>
<dbReference type="EMBL" id="HM008656">
    <property type="protein sequence ID" value="ADI48418.1"/>
    <property type="molecule type" value="mRNA"/>
</dbReference>
<dbReference type="RefSeq" id="NP_001182141.1">
    <property type="nucleotide sequence ID" value="NM_001195212.1"/>
</dbReference>
<dbReference type="STRING" id="4577.D9HP20"/>
<dbReference type="GeneID" id="100500711"/>
<dbReference type="KEGG" id="zma:100500711"/>
<dbReference type="InParanoid" id="D9HP20"/>
<dbReference type="OrthoDB" id="1045822at2759"/>
<dbReference type="Proteomes" id="UP000007305">
    <property type="component" value="Unplaced"/>
</dbReference>
<dbReference type="ExpressionAtlas" id="D9HP20">
    <property type="expression patterns" value="baseline and differential"/>
</dbReference>
<dbReference type="GO" id="GO:0016020">
    <property type="term" value="C:membrane"/>
    <property type="evidence" value="ECO:0007669"/>
    <property type="project" value="UniProtKB-SubCell"/>
</dbReference>
<dbReference type="InterPro" id="IPR006461">
    <property type="entry name" value="PLAC_motif_containing"/>
</dbReference>
<dbReference type="NCBIfam" id="TIGR01571">
    <property type="entry name" value="A_thal_Cys_rich"/>
    <property type="match status" value="1"/>
</dbReference>
<dbReference type="PANTHER" id="PTHR15907">
    <property type="entry name" value="DUF614 FAMILY PROTEIN-RELATED"/>
    <property type="match status" value="1"/>
</dbReference>
<dbReference type="Pfam" id="PF04749">
    <property type="entry name" value="PLAC8"/>
    <property type="match status" value="1"/>
</dbReference>
<comment type="subcellular location">
    <subcellularLocation>
        <location evidence="3">Membrane</location>
        <topology evidence="3">Single-pass membrane protein</topology>
    </subcellularLocation>
</comment>
<comment type="tissue specificity">
    <text evidence="2">Expressed in roots, coleoptiles, leaves, stalks, apical meristems, immature ears, endosperm, pericarp and tassel spikelets.</text>
</comment>
<comment type="similarity">
    <text evidence="3">Belongs to the cornifelin family.</text>
</comment>
<organism>
    <name type="scientific">Zea mays</name>
    <name type="common">Maize</name>
    <dbReference type="NCBI Taxonomy" id="4577"/>
    <lineage>
        <taxon>Eukaryota</taxon>
        <taxon>Viridiplantae</taxon>
        <taxon>Streptophyta</taxon>
        <taxon>Embryophyta</taxon>
        <taxon>Tracheophyta</taxon>
        <taxon>Spermatophyta</taxon>
        <taxon>Magnoliopsida</taxon>
        <taxon>Liliopsida</taxon>
        <taxon>Poales</taxon>
        <taxon>Poaceae</taxon>
        <taxon>PACMAD clade</taxon>
        <taxon>Panicoideae</taxon>
        <taxon>Andropogonodae</taxon>
        <taxon>Andropogoneae</taxon>
        <taxon>Tripsacinae</taxon>
        <taxon>Zea</taxon>
    </lineage>
</organism>
<protein>
    <recommendedName>
        <fullName>Cell number regulator 4</fullName>
    </recommendedName>
    <alternativeName>
        <fullName>ZmCNR04</fullName>
    </alternativeName>
</protein>
<evidence type="ECO:0000255" key="1"/>
<evidence type="ECO:0000269" key="2">
    <source>
    </source>
</evidence>
<evidence type="ECO:0000305" key="3"/>
<sequence>MSTYPPPTGEWTTGLCGCFSDCKSCCLSFLCPCIPFGQVAEVLDKGMTSCGLAGLLYCLLLHAGVAVVPCHCIYTCTYRRKLRAAYDLPPEPCADCCVHMWCGPCAISQMYRELKNRGADPAMGRQPAFSLSLTSHCRFFLKSKYYHIIKKNWRTVKYG</sequence>
<reference key="1">
    <citation type="journal article" date="2010" name="Plant Cell">
        <title>Cell Number Regulator1 affects plant and organ size in maize: implications for crop yield enhancement and heterosis.</title>
        <authorList>
            <person name="Guo M."/>
            <person name="Rupe M.A."/>
            <person name="Dieter J.A."/>
            <person name="Zou J."/>
            <person name="Spielbauer D."/>
            <person name="Duncan K.E."/>
            <person name="Howard R.J."/>
            <person name="Hou Z."/>
            <person name="Simmons C.R."/>
        </authorList>
    </citation>
    <scope>NUCLEOTIDE SEQUENCE [MRNA]</scope>
    <scope>TISSUE SPECIFICITY</scope>
    <scope>GENE FAMILY</scope>
    <scope>NOMENCLATURE</scope>
    <source>
        <strain>cv. B73</strain>
    </source>
</reference>
<accession>D9HP20</accession>
<gene>
    <name type="primary">CNR4</name>
</gene>
<keyword id="KW-0472">Membrane</keyword>
<keyword id="KW-1185">Reference proteome</keyword>
<keyword id="KW-0812">Transmembrane</keyword>
<keyword id="KW-1133">Transmembrane helix</keyword>
<name>CNR4_MAIZE</name>